<name>RIMM_RHILW</name>
<keyword id="KW-0143">Chaperone</keyword>
<keyword id="KW-0963">Cytoplasm</keyword>
<keyword id="KW-1185">Reference proteome</keyword>
<keyword id="KW-0690">Ribosome biogenesis</keyword>
<keyword id="KW-0698">rRNA processing</keyword>
<gene>
    <name evidence="1" type="primary">rimM</name>
    <name type="ordered locus">Rleg2_3753</name>
</gene>
<protein>
    <recommendedName>
        <fullName evidence="1">Ribosome maturation factor RimM</fullName>
    </recommendedName>
</protein>
<dbReference type="EMBL" id="CP001191">
    <property type="protein sequence ID" value="ACI57015.1"/>
    <property type="molecule type" value="Genomic_DNA"/>
</dbReference>
<dbReference type="RefSeq" id="WP_012559265.1">
    <property type="nucleotide sequence ID" value="NC_011369.1"/>
</dbReference>
<dbReference type="SMR" id="B5ZTH9"/>
<dbReference type="STRING" id="395492.Rleg2_3753"/>
<dbReference type="KEGG" id="rlt:Rleg2_3753"/>
<dbReference type="eggNOG" id="COG0806">
    <property type="taxonomic scope" value="Bacteria"/>
</dbReference>
<dbReference type="HOGENOM" id="CLU_077636_0_1_5"/>
<dbReference type="Proteomes" id="UP000008330">
    <property type="component" value="Chromosome"/>
</dbReference>
<dbReference type="GO" id="GO:0005737">
    <property type="term" value="C:cytoplasm"/>
    <property type="evidence" value="ECO:0007669"/>
    <property type="project" value="UniProtKB-SubCell"/>
</dbReference>
<dbReference type="GO" id="GO:0005840">
    <property type="term" value="C:ribosome"/>
    <property type="evidence" value="ECO:0007669"/>
    <property type="project" value="InterPro"/>
</dbReference>
<dbReference type="GO" id="GO:0043022">
    <property type="term" value="F:ribosome binding"/>
    <property type="evidence" value="ECO:0007669"/>
    <property type="project" value="InterPro"/>
</dbReference>
<dbReference type="GO" id="GO:0042274">
    <property type="term" value="P:ribosomal small subunit biogenesis"/>
    <property type="evidence" value="ECO:0007669"/>
    <property type="project" value="UniProtKB-UniRule"/>
</dbReference>
<dbReference type="GO" id="GO:0006364">
    <property type="term" value="P:rRNA processing"/>
    <property type="evidence" value="ECO:0007669"/>
    <property type="project" value="UniProtKB-UniRule"/>
</dbReference>
<dbReference type="Gene3D" id="2.30.30.240">
    <property type="entry name" value="PRC-barrel domain"/>
    <property type="match status" value="1"/>
</dbReference>
<dbReference type="Gene3D" id="2.40.30.60">
    <property type="entry name" value="RimM"/>
    <property type="match status" value="1"/>
</dbReference>
<dbReference type="HAMAP" id="MF_00014">
    <property type="entry name" value="Ribosome_mat_RimM"/>
    <property type="match status" value="1"/>
</dbReference>
<dbReference type="InterPro" id="IPR027275">
    <property type="entry name" value="PRC-brl_dom"/>
</dbReference>
<dbReference type="InterPro" id="IPR011033">
    <property type="entry name" value="PRC_barrel-like_sf"/>
</dbReference>
<dbReference type="InterPro" id="IPR011961">
    <property type="entry name" value="RimM"/>
</dbReference>
<dbReference type="InterPro" id="IPR002676">
    <property type="entry name" value="RimM_N"/>
</dbReference>
<dbReference type="InterPro" id="IPR036976">
    <property type="entry name" value="RimM_N_sf"/>
</dbReference>
<dbReference type="InterPro" id="IPR009000">
    <property type="entry name" value="Transl_B-barrel_sf"/>
</dbReference>
<dbReference type="NCBIfam" id="TIGR02273">
    <property type="entry name" value="16S_RimM"/>
    <property type="match status" value="1"/>
</dbReference>
<dbReference type="PANTHER" id="PTHR33692">
    <property type="entry name" value="RIBOSOME MATURATION FACTOR RIMM"/>
    <property type="match status" value="1"/>
</dbReference>
<dbReference type="PANTHER" id="PTHR33692:SF1">
    <property type="entry name" value="RIBOSOME MATURATION FACTOR RIMM"/>
    <property type="match status" value="1"/>
</dbReference>
<dbReference type="Pfam" id="PF05239">
    <property type="entry name" value="PRC"/>
    <property type="match status" value="1"/>
</dbReference>
<dbReference type="Pfam" id="PF01782">
    <property type="entry name" value="RimM"/>
    <property type="match status" value="1"/>
</dbReference>
<dbReference type="SUPFAM" id="SSF50346">
    <property type="entry name" value="PRC-barrel domain"/>
    <property type="match status" value="1"/>
</dbReference>
<dbReference type="SUPFAM" id="SSF50447">
    <property type="entry name" value="Translation proteins"/>
    <property type="match status" value="1"/>
</dbReference>
<organism>
    <name type="scientific">Rhizobium leguminosarum bv. trifolii (strain WSM2304)</name>
    <dbReference type="NCBI Taxonomy" id="395492"/>
    <lineage>
        <taxon>Bacteria</taxon>
        <taxon>Pseudomonadati</taxon>
        <taxon>Pseudomonadota</taxon>
        <taxon>Alphaproteobacteria</taxon>
        <taxon>Hyphomicrobiales</taxon>
        <taxon>Rhizobiaceae</taxon>
        <taxon>Rhizobium/Agrobacterium group</taxon>
        <taxon>Rhizobium</taxon>
    </lineage>
</organism>
<comment type="function">
    <text evidence="1">An accessory protein needed during the final step in the assembly of 30S ribosomal subunit, possibly for assembly of the head region. Essential for efficient processing of 16S rRNA. May be needed both before and after RbfA during the maturation of 16S rRNA. It has affinity for free ribosomal 30S subunits but not for 70S ribosomes.</text>
</comment>
<comment type="subunit">
    <text evidence="1">Binds ribosomal protein uS19.</text>
</comment>
<comment type="subcellular location">
    <subcellularLocation>
        <location evidence="1">Cytoplasm</location>
    </subcellularLocation>
</comment>
<comment type="domain">
    <text evidence="1">The PRC barrel domain binds ribosomal protein uS19.</text>
</comment>
<comment type="similarity">
    <text evidence="1">Belongs to the RimM family.</text>
</comment>
<sequence>MTKLENPVLMATIGGAQGLRGEVRAKAYTADPSALGDYGHLHSMDGRSFEVLEIRETKNVVIVRFRGVNDRNAAEALNGLELYIERDNLPDEELEDDEFYYADLEGLEARDDKGASYGTVTGVFDFGAGDLLELKGPGKRPVLIPFSEASVLEIDLEAGTLLIDPLAAGLVDDPEELSKFTADKPKKKK</sequence>
<reference key="1">
    <citation type="journal article" date="2010" name="Stand. Genomic Sci.">
        <title>Complete genome sequence of Rhizobium leguminosarum bv trifolii strain WSM2304, an effective microsymbiont of the South American clover Trifolium polymorphum.</title>
        <authorList>
            <person name="Reeve W."/>
            <person name="O'Hara G."/>
            <person name="Chain P."/>
            <person name="Ardley J."/>
            <person name="Brau L."/>
            <person name="Nandesena K."/>
            <person name="Tiwari R."/>
            <person name="Malfatti S."/>
            <person name="Kiss H."/>
            <person name="Lapidus A."/>
            <person name="Copeland A."/>
            <person name="Nolan M."/>
            <person name="Land M."/>
            <person name="Ivanova N."/>
            <person name="Mavromatis K."/>
            <person name="Markowitz V."/>
            <person name="Kyrpides N."/>
            <person name="Melino V."/>
            <person name="Denton M."/>
            <person name="Yates R."/>
            <person name="Howieson J."/>
        </authorList>
    </citation>
    <scope>NUCLEOTIDE SEQUENCE [LARGE SCALE GENOMIC DNA]</scope>
    <source>
        <strain>WSM2304</strain>
    </source>
</reference>
<evidence type="ECO:0000255" key="1">
    <source>
        <dbReference type="HAMAP-Rule" id="MF_00014"/>
    </source>
</evidence>
<proteinExistence type="inferred from homology"/>
<accession>B5ZTH9</accession>
<feature type="chain" id="PRO_1000089514" description="Ribosome maturation factor RimM">
    <location>
        <begin position="1"/>
        <end position="189"/>
    </location>
</feature>
<feature type="domain" description="PRC barrel" evidence="1">
    <location>
        <begin position="95"/>
        <end position="177"/>
    </location>
</feature>